<organism>
    <name type="scientific">Haemophilus influenzae (strain ATCC 51907 / DSM 11121 / KW20 / Rd)</name>
    <dbReference type="NCBI Taxonomy" id="71421"/>
    <lineage>
        <taxon>Bacteria</taxon>
        <taxon>Pseudomonadati</taxon>
        <taxon>Pseudomonadota</taxon>
        <taxon>Gammaproteobacteria</taxon>
        <taxon>Pasteurellales</taxon>
        <taxon>Pasteurellaceae</taxon>
        <taxon>Haemophilus</taxon>
    </lineage>
</organism>
<accession>P45477</accession>
<comment type="function">
    <text evidence="1">Catalyzes the conversion of dihydroorotate to orotate with quinone as electron acceptor.</text>
</comment>
<comment type="catalytic activity">
    <reaction>
        <text>(S)-dihydroorotate + a quinone = orotate + a quinol</text>
        <dbReference type="Rhea" id="RHEA:30187"/>
        <dbReference type="ChEBI" id="CHEBI:24646"/>
        <dbReference type="ChEBI" id="CHEBI:30839"/>
        <dbReference type="ChEBI" id="CHEBI:30864"/>
        <dbReference type="ChEBI" id="CHEBI:132124"/>
        <dbReference type="EC" id="1.3.5.2"/>
    </reaction>
</comment>
<comment type="cofactor">
    <cofactor evidence="1">
        <name>FMN</name>
        <dbReference type="ChEBI" id="CHEBI:58210"/>
    </cofactor>
    <text evidence="1">Binds 1 FMN per subunit.</text>
</comment>
<comment type="pathway">
    <text>Pyrimidine metabolism; UMP biosynthesis via de novo pathway; orotate from (S)-dihydroorotate (quinone route): step 1/1.</text>
</comment>
<comment type="subunit">
    <text evidence="1">Monomer.</text>
</comment>
<comment type="subcellular location">
    <subcellularLocation>
        <location evidence="1">Cell membrane</location>
        <topology evidence="1">Peripheral membrane protein</topology>
    </subcellularLocation>
</comment>
<comment type="similarity">
    <text evidence="2">Belongs to the dihydroorotate dehydrogenase family. Type 2 subfamily.</text>
</comment>
<dbReference type="EC" id="1.3.5.2"/>
<dbReference type="EMBL" id="L42023">
    <property type="protein sequence ID" value="AAC23047.1"/>
    <property type="molecule type" value="Genomic_DNA"/>
</dbReference>
<dbReference type="PIR" id="A64122">
    <property type="entry name" value="A64122"/>
</dbReference>
<dbReference type="RefSeq" id="NP_439554.1">
    <property type="nucleotide sequence ID" value="NC_000907.1"/>
</dbReference>
<dbReference type="SMR" id="P45477"/>
<dbReference type="STRING" id="71421.HI_1401"/>
<dbReference type="EnsemblBacteria" id="AAC23047">
    <property type="protein sequence ID" value="AAC23047"/>
    <property type="gene ID" value="HI_1401"/>
</dbReference>
<dbReference type="KEGG" id="hin:HI_1401"/>
<dbReference type="PATRIC" id="fig|71421.8.peg.1461"/>
<dbReference type="eggNOG" id="COG0167">
    <property type="taxonomic scope" value="Bacteria"/>
</dbReference>
<dbReference type="HOGENOM" id="CLU_013640_2_0_6"/>
<dbReference type="OrthoDB" id="9802377at2"/>
<dbReference type="PhylomeDB" id="P45477"/>
<dbReference type="BioCyc" id="HINF71421:G1GJ1-1428-MONOMER"/>
<dbReference type="UniPathway" id="UPA00070">
    <property type="reaction ID" value="UER00946"/>
</dbReference>
<dbReference type="Proteomes" id="UP000000579">
    <property type="component" value="Chromosome"/>
</dbReference>
<dbReference type="GO" id="GO:0005737">
    <property type="term" value="C:cytoplasm"/>
    <property type="evidence" value="ECO:0007669"/>
    <property type="project" value="InterPro"/>
</dbReference>
<dbReference type="GO" id="GO:0005886">
    <property type="term" value="C:plasma membrane"/>
    <property type="evidence" value="ECO:0007669"/>
    <property type="project" value="UniProtKB-SubCell"/>
</dbReference>
<dbReference type="GO" id="GO:0106430">
    <property type="term" value="F:dihydroorotate dehydrogenase (quinone) activity"/>
    <property type="evidence" value="ECO:0007669"/>
    <property type="project" value="UniProtKB-EC"/>
</dbReference>
<dbReference type="GO" id="GO:0004152">
    <property type="term" value="F:dihydroorotate dehydrogenase activity"/>
    <property type="evidence" value="ECO:0000318"/>
    <property type="project" value="GO_Central"/>
</dbReference>
<dbReference type="GO" id="GO:0006207">
    <property type="term" value="P:'de novo' pyrimidine nucleobase biosynthetic process"/>
    <property type="evidence" value="ECO:0000318"/>
    <property type="project" value="GO_Central"/>
</dbReference>
<dbReference type="GO" id="GO:0044205">
    <property type="term" value="P:'de novo' UMP biosynthetic process"/>
    <property type="evidence" value="ECO:0007669"/>
    <property type="project" value="UniProtKB-UniRule"/>
</dbReference>
<dbReference type="GO" id="GO:0009220">
    <property type="term" value="P:pyrimidine ribonucleotide biosynthetic process"/>
    <property type="evidence" value="ECO:0000318"/>
    <property type="project" value="GO_Central"/>
</dbReference>
<dbReference type="CDD" id="cd04738">
    <property type="entry name" value="DHOD_2_like"/>
    <property type="match status" value="1"/>
</dbReference>
<dbReference type="FunFam" id="3.20.20.70:FF:000028">
    <property type="entry name" value="Dihydroorotate dehydrogenase (quinone)"/>
    <property type="match status" value="1"/>
</dbReference>
<dbReference type="Gene3D" id="3.20.20.70">
    <property type="entry name" value="Aldolase class I"/>
    <property type="match status" value="1"/>
</dbReference>
<dbReference type="HAMAP" id="MF_00225">
    <property type="entry name" value="DHO_dh_type2"/>
    <property type="match status" value="1"/>
</dbReference>
<dbReference type="InterPro" id="IPR013785">
    <property type="entry name" value="Aldolase_TIM"/>
</dbReference>
<dbReference type="InterPro" id="IPR050074">
    <property type="entry name" value="DHO_dehydrogenase"/>
</dbReference>
<dbReference type="InterPro" id="IPR012135">
    <property type="entry name" value="Dihydroorotate_DH_1_2"/>
</dbReference>
<dbReference type="InterPro" id="IPR005719">
    <property type="entry name" value="Dihydroorotate_DH_2"/>
</dbReference>
<dbReference type="InterPro" id="IPR005720">
    <property type="entry name" value="Dihydroorotate_DH_cat"/>
</dbReference>
<dbReference type="InterPro" id="IPR001295">
    <property type="entry name" value="Dihydroorotate_DH_CS"/>
</dbReference>
<dbReference type="NCBIfam" id="NF003644">
    <property type="entry name" value="PRK05286.1-1"/>
    <property type="match status" value="1"/>
</dbReference>
<dbReference type="NCBIfam" id="NF003646">
    <property type="entry name" value="PRK05286.1-4"/>
    <property type="match status" value="1"/>
</dbReference>
<dbReference type="NCBIfam" id="NF003652">
    <property type="entry name" value="PRK05286.2-5"/>
    <property type="match status" value="1"/>
</dbReference>
<dbReference type="NCBIfam" id="TIGR01036">
    <property type="entry name" value="pyrD_sub2"/>
    <property type="match status" value="1"/>
</dbReference>
<dbReference type="PANTHER" id="PTHR48109:SF4">
    <property type="entry name" value="DIHYDROOROTATE DEHYDROGENASE (QUINONE), MITOCHONDRIAL"/>
    <property type="match status" value="1"/>
</dbReference>
<dbReference type="PANTHER" id="PTHR48109">
    <property type="entry name" value="DIHYDROOROTATE DEHYDROGENASE (QUINONE), MITOCHONDRIAL-RELATED"/>
    <property type="match status" value="1"/>
</dbReference>
<dbReference type="Pfam" id="PF01180">
    <property type="entry name" value="DHO_dh"/>
    <property type="match status" value="1"/>
</dbReference>
<dbReference type="PIRSF" id="PIRSF000164">
    <property type="entry name" value="DHO_oxidase"/>
    <property type="match status" value="1"/>
</dbReference>
<dbReference type="SUPFAM" id="SSF51395">
    <property type="entry name" value="FMN-linked oxidoreductases"/>
    <property type="match status" value="1"/>
</dbReference>
<dbReference type="PROSITE" id="PS00911">
    <property type="entry name" value="DHODEHASE_1"/>
    <property type="match status" value="1"/>
</dbReference>
<dbReference type="PROSITE" id="PS00912">
    <property type="entry name" value="DHODEHASE_2"/>
    <property type="match status" value="1"/>
</dbReference>
<protein>
    <recommendedName>
        <fullName>Dihydroorotate dehydrogenase (quinone)</fullName>
        <ecNumber>1.3.5.2</ecNumber>
    </recommendedName>
    <alternativeName>
        <fullName>DHOdehase</fullName>
        <shortName>DHOD</shortName>
        <shortName>DHODase</shortName>
    </alternativeName>
    <alternativeName>
        <fullName>Dihydroorotate oxidase</fullName>
    </alternativeName>
</protein>
<feature type="chain" id="PRO_0000148444" description="Dihydroorotate dehydrogenase (quinone)">
    <location>
        <begin position="1"/>
        <end position="339"/>
    </location>
</feature>
<feature type="active site" description="Nucleophile" evidence="1">
    <location>
        <position position="177"/>
    </location>
</feature>
<feature type="binding site" evidence="1">
    <location>
        <begin position="64"/>
        <end position="68"/>
    </location>
    <ligand>
        <name>FMN</name>
        <dbReference type="ChEBI" id="CHEBI:58210"/>
    </ligand>
</feature>
<feature type="binding site" evidence="1">
    <location>
        <position position="68"/>
    </location>
    <ligand>
        <name>substrate</name>
    </ligand>
</feature>
<feature type="binding site" evidence="1">
    <location>
        <position position="88"/>
    </location>
    <ligand>
        <name>FMN</name>
        <dbReference type="ChEBI" id="CHEBI:58210"/>
    </ligand>
</feature>
<feature type="binding site" evidence="1">
    <location>
        <begin position="113"/>
        <end position="117"/>
    </location>
    <ligand>
        <name>substrate</name>
    </ligand>
</feature>
<feature type="binding site" evidence="1">
    <location>
        <position position="141"/>
    </location>
    <ligand>
        <name>FMN</name>
        <dbReference type="ChEBI" id="CHEBI:58210"/>
    </ligand>
</feature>
<feature type="binding site" evidence="1">
    <location>
        <position position="174"/>
    </location>
    <ligand>
        <name>FMN</name>
        <dbReference type="ChEBI" id="CHEBI:58210"/>
    </ligand>
</feature>
<feature type="binding site" evidence="1">
    <location>
        <position position="174"/>
    </location>
    <ligand>
        <name>substrate</name>
    </ligand>
</feature>
<feature type="binding site" evidence="1">
    <location>
        <position position="179"/>
    </location>
    <ligand>
        <name>substrate</name>
    </ligand>
</feature>
<feature type="binding site" evidence="1">
    <location>
        <position position="219"/>
    </location>
    <ligand>
        <name>FMN</name>
        <dbReference type="ChEBI" id="CHEBI:58210"/>
    </ligand>
</feature>
<feature type="binding site" evidence="1">
    <location>
        <position position="247"/>
    </location>
    <ligand>
        <name>FMN</name>
        <dbReference type="ChEBI" id="CHEBI:58210"/>
    </ligand>
</feature>
<feature type="binding site" evidence="1">
    <location>
        <begin position="248"/>
        <end position="249"/>
    </location>
    <ligand>
        <name>substrate</name>
    </ligand>
</feature>
<feature type="binding site" evidence="1">
    <location>
        <position position="270"/>
    </location>
    <ligand>
        <name>FMN</name>
        <dbReference type="ChEBI" id="CHEBI:58210"/>
    </ligand>
</feature>
<feature type="binding site" evidence="1">
    <location>
        <position position="299"/>
    </location>
    <ligand>
        <name>FMN</name>
        <dbReference type="ChEBI" id="CHEBI:58210"/>
    </ligand>
</feature>
<feature type="binding site" evidence="1">
    <location>
        <begin position="320"/>
        <end position="321"/>
    </location>
    <ligand>
        <name>FMN</name>
        <dbReference type="ChEBI" id="CHEBI:58210"/>
    </ligand>
</feature>
<keyword id="KW-1003">Cell membrane</keyword>
<keyword id="KW-0285">Flavoprotein</keyword>
<keyword id="KW-0288">FMN</keyword>
<keyword id="KW-0472">Membrane</keyword>
<keyword id="KW-0560">Oxidoreductase</keyword>
<keyword id="KW-0665">Pyrimidine biosynthesis</keyword>
<keyword id="KW-1185">Reference proteome</keyword>
<sequence length="339" mass="37271">MYQLFRHGIFQMDAEKAHNFTIQCLKLAGNPLFQPILKSLIHAPKGFPKTVMGVNFPNPIGLAAGADKNGDAIDGFGALGFGFLELGTVTPVAQDGNAKPRQFRLIEAEGIINRNGFNNNGIDYLIENVKNARYKGVIGINIGKNKFTSLEQGKDDYIFCLNKAYNYAGYITVNISSPNTPDLRQLQYGDYFDDLLRSIKDRQAILANQYNKYVPIAVKIAPDLTESELVQIADTLVRHKMDGVIATNTTISRDTVTGMKNAEQQGGLSGKPLQHKSTEIIKRLHQELKGQIPIIGSGGIDGLQNAQEKIEAGAELLQVYSGLIYHGPKLVKELVKNIK</sequence>
<gene>
    <name type="primary">pyrD</name>
    <name type="ordered locus">HI_1401</name>
</gene>
<proteinExistence type="inferred from homology"/>
<evidence type="ECO:0000250" key="1"/>
<evidence type="ECO:0000305" key="2"/>
<reference key="1">
    <citation type="journal article" date="1995" name="Science">
        <title>Whole-genome random sequencing and assembly of Haemophilus influenzae Rd.</title>
        <authorList>
            <person name="Fleischmann R.D."/>
            <person name="Adams M.D."/>
            <person name="White O."/>
            <person name="Clayton R.A."/>
            <person name="Kirkness E.F."/>
            <person name="Kerlavage A.R."/>
            <person name="Bult C.J."/>
            <person name="Tomb J.-F."/>
            <person name="Dougherty B.A."/>
            <person name="Merrick J.M."/>
            <person name="McKenney K."/>
            <person name="Sutton G.G."/>
            <person name="FitzHugh W."/>
            <person name="Fields C.A."/>
            <person name="Gocayne J.D."/>
            <person name="Scott J.D."/>
            <person name="Shirley R."/>
            <person name="Liu L.-I."/>
            <person name="Glodek A."/>
            <person name="Kelley J.M."/>
            <person name="Weidman J.F."/>
            <person name="Phillips C.A."/>
            <person name="Spriggs T."/>
            <person name="Hedblom E."/>
            <person name="Cotton M.D."/>
            <person name="Utterback T.R."/>
            <person name="Hanna M.C."/>
            <person name="Nguyen D.T."/>
            <person name="Saudek D.M."/>
            <person name="Brandon R.C."/>
            <person name="Fine L.D."/>
            <person name="Fritchman J.L."/>
            <person name="Fuhrmann J.L."/>
            <person name="Geoghagen N.S.M."/>
            <person name="Gnehm C.L."/>
            <person name="McDonald L.A."/>
            <person name="Small K.V."/>
            <person name="Fraser C.M."/>
            <person name="Smith H.O."/>
            <person name="Venter J.C."/>
        </authorList>
    </citation>
    <scope>NUCLEOTIDE SEQUENCE [LARGE SCALE GENOMIC DNA]</scope>
    <source>
        <strain>ATCC 51907 / DSM 11121 / KW20 / Rd</strain>
    </source>
</reference>
<name>PYRD_HAEIN</name>